<reference key="1">
    <citation type="journal article" date="1999" name="Nature">
        <title>Sequence and analysis of chromosome 4 of the plant Arabidopsis thaliana.</title>
        <authorList>
            <person name="Mayer K.F.X."/>
            <person name="Schueller C."/>
            <person name="Wambutt R."/>
            <person name="Murphy G."/>
            <person name="Volckaert G."/>
            <person name="Pohl T."/>
            <person name="Duesterhoeft A."/>
            <person name="Stiekema W."/>
            <person name="Entian K.-D."/>
            <person name="Terryn N."/>
            <person name="Harris B."/>
            <person name="Ansorge W."/>
            <person name="Brandt P."/>
            <person name="Grivell L.A."/>
            <person name="Rieger M."/>
            <person name="Weichselgartner M."/>
            <person name="de Simone V."/>
            <person name="Obermaier B."/>
            <person name="Mache R."/>
            <person name="Mueller M."/>
            <person name="Kreis M."/>
            <person name="Delseny M."/>
            <person name="Puigdomenech P."/>
            <person name="Watson M."/>
            <person name="Schmidtheini T."/>
            <person name="Reichert B."/>
            <person name="Portetelle D."/>
            <person name="Perez-Alonso M."/>
            <person name="Boutry M."/>
            <person name="Bancroft I."/>
            <person name="Vos P."/>
            <person name="Hoheisel J."/>
            <person name="Zimmermann W."/>
            <person name="Wedler H."/>
            <person name="Ridley P."/>
            <person name="Langham S.-A."/>
            <person name="McCullagh B."/>
            <person name="Bilham L."/>
            <person name="Robben J."/>
            <person name="van der Schueren J."/>
            <person name="Grymonprez B."/>
            <person name="Chuang Y.-J."/>
            <person name="Vandenbussche F."/>
            <person name="Braeken M."/>
            <person name="Weltjens I."/>
            <person name="Voet M."/>
            <person name="Bastiaens I."/>
            <person name="Aert R."/>
            <person name="Defoor E."/>
            <person name="Weitzenegger T."/>
            <person name="Bothe G."/>
            <person name="Ramsperger U."/>
            <person name="Hilbert H."/>
            <person name="Braun M."/>
            <person name="Holzer E."/>
            <person name="Brandt A."/>
            <person name="Peters S."/>
            <person name="van Staveren M."/>
            <person name="Dirkse W."/>
            <person name="Mooijman P."/>
            <person name="Klein Lankhorst R."/>
            <person name="Rose M."/>
            <person name="Hauf J."/>
            <person name="Koetter P."/>
            <person name="Berneiser S."/>
            <person name="Hempel S."/>
            <person name="Feldpausch M."/>
            <person name="Lamberth S."/>
            <person name="Van den Daele H."/>
            <person name="De Keyser A."/>
            <person name="Buysshaert C."/>
            <person name="Gielen J."/>
            <person name="Villarroel R."/>
            <person name="De Clercq R."/>
            <person name="van Montagu M."/>
            <person name="Rogers J."/>
            <person name="Cronin A."/>
            <person name="Quail M.A."/>
            <person name="Bray-Allen S."/>
            <person name="Clark L."/>
            <person name="Doggett J."/>
            <person name="Hall S."/>
            <person name="Kay M."/>
            <person name="Lennard N."/>
            <person name="McLay K."/>
            <person name="Mayes R."/>
            <person name="Pettett A."/>
            <person name="Rajandream M.A."/>
            <person name="Lyne M."/>
            <person name="Benes V."/>
            <person name="Rechmann S."/>
            <person name="Borkova D."/>
            <person name="Bloecker H."/>
            <person name="Scharfe M."/>
            <person name="Grimm M."/>
            <person name="Loehnert T.-H."/>
            <person name="Dose S."/>
            <person name="de Haan M."/>
            <person name="Maarse A.C."/>
            <person name="Schaefer M."/>
            <person name="Mueller-Auer S."/>
            <person name="Gabel C."/>
            <person name="Fuchs M."/>
            <person name="Fartmann B."/>
            <person name="Granderath K."/>
            <person name="Dauner D."/>
            <person name="Herzl A."/>
            <person name="Neumann S."/>
            <person name="Argiriou A."/>
            <person name="Vitale D."/>
            <person name="Liguori R."/>
            <person name="Piravandi E."/>
            <person name="Massenet O."/>
            <person name="Quigley F."/>
            <person name="Clabauld G."/>
            <person name="Muendlein A."/>
            <person name="Felber R."/>
            <person name="Schnabl S."/>
            <person name="Hiller R."/>
            <person name="Schmidt W."/>
            <person name="Lecharny A."/>
            <person name="Aubourg S."/>
            <person name="Chefdor F."/>
            <person name="Cooke R."/>
            <person name="Berger C."/>
            <person name="Monfort A."/>
            <person name="Casacuberta E."/>
            <person name="Gibbons T."/>
            <person name="Weber N."/>
            <person name="Vandenbol M."/>
            <person name="Bargues M."/>
            <person name="Terol J."/>
            <person name="Torres A."/>
            <person name="Perez-Perez A."/>
            <person name="Purnelle B."/>
            <person name="Bent E."/>
            <person name="Johnson S."/>
            <person name="Tacon D."/>
            <person name="Jesse T."/>
            <person name="Heijnen L."/>
            <person name="Schwarz S."/>
            <person name="Scholler P."/>
            <person name="Heber S."/>
            <person name="Francs P."/>
            <person name="Bielke C."/>
            <person name="Frishman D."/>
            <person name="Haase D."/>
            <person name="Lemcke K."/>
            <person name="Mewes H.-W."/>
            <person name="Stocker S."/>
            <person name="Zaccaria P."/>
            <person name="Bevan M."/>
            <person name="Wilson R.K."/>
            <person name="de la Bastide M."/>
            <person name="Habermann K."/>
            <person name="Parnell L."/>
            <person name="Dedhia N."/>
            <person name="Gnoj L."/>
            <person name="Schutz K."/>
            <person name="Huang E."/>
            <person name="Spiegel L."/>
            <person name="Sekhon M."/>
            <person name="Murray J."/>
            <person name="Sheet P."/>
            <person name="Cordes M."/>
            <person name="Abu-Threideh J."/>
            <person name="Stoneking T."/>
            <person name="Kalicki J."/>
            <person name="Graves T."/>
            <person name="Harmon G."/>
            <person name="Edwards J."/>
            <person name="Latreille P."/>
            <person name="Courtney L."/>
            <person name="Cloud J."/>
            <person name="Abbott A."/>
            <person name="Scott K."/>
            <person name="Johnson D."/>
            <person name="Minx P."/>
            <person name="Bentley D."/>
            <person name="Fulton B."/>
            <person name="Miller N."/>
            <person name="Greco T."/>
            <person name="Kemp K."/>
            <person name="Kramer J."/>
            <person name="Fulton L."/>
            <person name="Mardis E."/>
            <person name="Dante M."/>
            <person name="Pepin K."/>
            <person name="Hillier L.W."/>
            <person name="Nelson J."/>
            <person name="Spieth J."/>
            <person name="Ryan E."/>
            <person name="Andrews S."/>
            <person name="Geisel C."/>
            <person name="Layman D."/>
            <person name="Du H."/>
            <person name="Ali J."/>
            <person name="Berghoff A."/>
            <person name="Jones K."/>
            <person name="Drone K."/>
            <person name="Cotton M."/>
            <person name="Joshu C."/>
            <person name="Antonoiu B."/>
            <person name="Zidanic M."/>
            <person name="Strong C."/>
            <person name="Sun H."/>
            <person name="Lamar B."/>
            <person name="Yordan C."/>
            <person name="Ma P."/>
            <person name="Zhong J."/>
            <person name="Preston R."/>
            <person name="Vil D."/>
            <person name="Shekher M."/>
            <person name="Matero A."/>
            <person name="Shah R."/>
            <person name="Swaby I.K."/>
            <person name="O'Shaughnessy A."/>
            <person name="Rodriguez M."/>
            <person name="Hoffman J."/>
            <person name="Till S."/>
            <person name="Granat S."/>
            <person name="Shohdy N."/>
            <person name="Hasegawa A."/>
            <person name="Hameed A."/>
            <person name="Lodhi M."/>
            <person name="Johnson A."/>
            <person name="Chen E."/>
            <person name="Marra M.A."/>
            <person name="Martienssen R."/>
            <person name="McCombie W.R."/>
        </authorList>
    </citation>
    <scope>NUCLEOTIDE SEQUENCE [LARGE SCALE GENOMIC DNA]</scope>
    <source>
        <strain>cv. Columbia</strain>
    </source>
</reference>
<reference key="2">
    <citation type="journal article" date="2017" name="Plant J.">
        <title>Araport11: a complete reannotation of the Arabidopsis thaliana reference genome.</title>
        <authorList>
            <person name="Cheng C.Y."/>
            <person name="Krishnakumar V."/>
            <person name="Chan A.P."/>
            <person name="Thibaud-Nissen F."/>
            <person name="Schobel S."/>
            <person name="Town C.D."/>
        </authorList>
    </citation>
    <scope>GENOME REANNOTATION</scope>
    <source>
        <strain>cv. Columbia</strain>
    </source>
</reference>
<reference key="3">
    <citation type="journal article" date="2000" name="Trends Plant Sci.">
        <title>F-box proteins in Arabidopsis.</title>
        <authorList>
            <person name="Xiao W."/>
            <person name="Jang J.-C."/>
        </authorList>
    </citation>
    <scope>GENE FAMILY</scope>
    <scope>NOMENCLATURE</scope>
</reference>
<proteinExistence type="predicted"/>
<accession>Q9M096</accession>
<organism>
    <name type="scientific">Arabidopsis thaliana</name>
    <name type="common">Mouse-ear cress</name>
    <dbReference type="NCBI Taxonomy" id="3702"/>
    <lineage>
        <taxon>Eukaryota</taxon>
        <taxon>Viridiplantae</taxon>
        <taxon>Streptophyta</taxon>
        <taxon>Embryophyta</taxon>
        <taxon>Tracheophyta</taxon>
        <taxon>Spermatophyta</taxon>
        <taxon>Magnoliopsida</taxon>
        <taxon>eudicotyledons</taxon>
        <taxon>Gunneridae</taxon>
        <taxon>Pentapetalae</taxon>
        <taxon>rosids</taxon>
        <taxon>malvids</taxon>
        <taxon>Brassicales</taxon>
        <taxon>Brassicaceae</taxon>
        <taxon>Camelineae</taxon>
        <taxon>Arabidopsis</taxon>
    </lineage>
</organism>
<keyword id="KW-0433">Leucine-rich repeat</keyword>
<keyword id="KW-1185">Reference proteome</keyword>
<keyword id="KW-0677">Repeat</keyword>
<protein>
    <recommendedName>
        <fullName>Putative F-box/LRR-repeat protein 19</fullName>
    </recommendedName>
</protein>
<sequence length="301" mass="34304">MEVNGGEGKVEMGSGLYPDWSELTRECLLDIFSRLSQEQRWIGPMLVSKNWMNACYDPTLNTIFDLETRFLSFPESINWWTPEFEDKVDSFLRSVVDRSEGGLTEIRIRHCTERSLSYAAERCPNLEVLWIKNCPNVTDASMEKIAMNCPNLRELDISYSYGITHESLITLGRSCQNLKILKRNLLPRLGPSLPTIVAPLDYLATFPRYGNIEARIIGKYMTQLKHLEIRYSTLTARGLDSVCKGCSNLEYMDLRGCISLTRSDINTNTSGLKNLTEIIKPDFNPPIAVLRVPRPGNPREE</sequence>
<name>FBL19_ARATH</name>
<dbReference type="EMBL" id="AL161577">
    <property type="protein sequence ID" value="CAB79782.1"/>
    <property type="molecule type" value="Genomic_DNA"/>
</dbReference>
<dbReference type="EMBL" id="CP002687">
    <property type="protein sequence ID" value="AEE85789.1"/>
    <property type="molecule type" value="Genomic_DNA"/>
</dbReference>
<dbReference type="PIR" id="E85358">
    <property type="entry name" value="E85358"/>
</dbReference>
<dbReference type="RefSeq" id="NP_567849.1">
    <property type="nucleotide sequence ID" value="NM_119210.2"/>
</dbReference>
<dbReference type="SMR" id="Q9M096"/>
<dbReference type="STRING" id="3702.Q9M096"/>
<dbReference type="PaxDb" id="3702-AT4G30640.1"/>
<dbReference type="ProteomicsDB" id="230698"/>
<dbReference type="EnsemblPlants" id="AT4G30640.1">
    <property type="protein sequence ID" value="AT4G30640.1"/>
    <property type="gene ID" value="AT4G30640"/>
</dbReference>
<dbReference type="GeneID" id="829187"/>
<dbReference type="Gramene" id="AT4G30640.1">
    <property type="protein sequence ID" value="AT4G30640.1"/>
    <property type="gene ID" value="AT4G30640"/>
</dbReference>
<dbReference type="KEGG" id="ath:AT4G30640"/>
<dbReference type="Araport" id="AT4G30640"/>
<dbReference type="TAIR" id="AT4G30640"/>
<dbReference type="eggNOG" id="KOG1947">
    <property type="taxonomic scope" value="Eukaryota"/>
</dbReference>
<dbReference type="HOGENOM" id="CLU_044915_3_0_1"/>
<dbReference type="InParanoid" id="Q9M096"/>
<dbReference type="OMA" id="SYGITHE"/>
<dbReference type="PhylomeDB" id="Q9M096"/>
<dbReference type="PRO" id="PR:Q9M096"/>
<dbReference type="Proteomes" id="UP000006548">
    <property type="component" value="Chromosome 4"/>
</dbReference>
<dbReference type="ExpressionAtlas" id="Q9M096">
    <property type="expression patterns" value="baseline and differential"/>
</dbReference>
<dbReference type="FunFam" id="3.80.10.10:FF:001963">
    <property type="entry name" value="Putative F-box/LRR-repeat protein 19"/>
    <property type="match status" value="1"/>
</dbReference>
<dbReference type="Gene3D" id="1.20.1280.50">
    <property type="match status" value="1"/>
</dbReference>
<dbReference type="Gene3D" id="3.80.10.10">
    <property type="entry name" value="Ribonuclease Inhibitor"/>
    <property type="match status" value="1"/>
</dbReference>
<dbReference type="InterPro" id="IPR036047">
    <property type="entry name" value="F-box-like_dom_sf"/>
</dbReference>
<dbReference type="InterPro" id="IPR001810">
    <property type="entry name" value="F-box_dom"/>
</dbReference>
<dbReference type="InterPro" id="IPR006553">
    <property type="entry name" value="Leu-rich_rpt_Cys-con_subtyp"/>
</dbReference>
<dbReference type="InterPro" id="IPR032675">
    <property type="entry name" value="LRR_dom_sf"/>
</dbReference>
<dbReference type="PANTHER" id="PTHR38926:SF5">
    <property type="entry name" value="F-BOX AND LEUCINE-RICH REPEAT PROTEIN 6"/>
    <property type="match status" value="1"/>
</dbReference>
<dbReference type="PANTHER" id="PTHR38926">
    <property type="entry name" value="F-BOX DOMAIN CONTAINING PROTEIN, EXPRESSED"/>
    <property type="match status" value="1"/>
</dbReference>
<dbReference type="Pfam" id="PF00646">
    <property type="entry name" value="F-box"/>
    <property type="match status" value="1"/>
</dbReference>
<dbReference type="SMART" id="SM00367">
    <property type="entry name" value="LRR_CC"/>
    <property type="match status" value="4"/>
</dbReference>
<dbReference type="SUPFAM" id="SSF81383">
    <property type="entry name" value="F-box domain"/>
    <property type="match status" value="1"/>
</dbReference>
<dbReference type="SUPFAM" id="SSF52047">
    <property type="entry name" value="RNI-like"/>
    <property type="match status" value="1"/>
</dbReference>
<feature type="chain" id="PRO_0000272258" description="Putative F-box/LRR-repeat protein 19">
    <location>
        <begin position="1"/>
        <end position="301"/>
    </location>
</feature>
<feature type="domain" description="F-box">
    <location>
        <begin position="18"/>
        <end position="66"/>
    </location>
</feature>
<feature type="repeat" description="LRR 1">
    <location>
        <begin position="108"/>
        <end position="133"/>
    </location>
</feature>
<feature type="repeat" description="LRR 2">
    <location>
        <begin position="134"/>
        <end position="159"/>
    </location>
</feature>
<feature type="repeat" description="LRR 3">
    <location>
        <begin position="160"/>
        <end position="185"/>
    </location>
</feature>
<feature type="repeat" description="LRR 4">
    <location>
        <begin position="231"/>
        <end position="256"/>
    </location>
</feature>
<feature type="repeat" description="LRR 5">
    <location>
        <begin position="257"/>
        <end position="282"/>
    </location>
</feature>
<gene>
    <name type="primary">FBL19</name>
    <name type="ordered locus">At4g30640</name>
    <name type="ORF">F17I23.20</name>
</gene>